<feature type="chain" id="PRO_0000306492" description="Imidazolonepropionase">
    <location>
        <begin position="1"/>
        <end position="427"/>
    </location>
</feature>
<feature type="binding site" evidence="1">
    <location>
        <position position="96"/>
    </location>
    <ligand>
        <name>Fe(3+)</name>
        <dbReference type="ChEBI" id="CHEBI:29034"/>
    </ligand>
</feature>
<feature type="binding site" evidence="1">
    <location>
        <position position="96"/>
    </location>
    <ligand>
        <name>Zn(2+)</name>
        <dbReference type="ChEBI" id="CHEBI:29105"/>
    </ligand>
</feature>
<feature type="binding site" evidence="1">
    <location>
        <position position="98"/>
    </location>
    <ligand>
        <name>Fe(3+)</name>
        <dbReference type="ChEBI" id="CHEBI:29034"/>
    </ligand>
</feature>
<feature type="binding site" evidence="1">
    <location>
        <position position="98"/>
    </location>
    <ligand>
        <name>Zn(2+)</name>
        <dbReference type="ChEBI" id="CHEBI:29105"/>
    </ligand>
</feature>
<feature type="binding site" evidence="1">
    <location>
        <position position="105"/>
    </location>
    <ligand>
        <name>4-imidazolone-5-propanoate</name>
        <dbReference type="ChEBI" id="CHEBI:77893"/>
    </ligand>
</feature>
<feature type="binding site" evidence="1">
    <location>
        <position position="168"/>
    </location>
    <ligand>
        <name>4-imidazolone-5-propanoate</name>
        <dbReference type="ChEBI" id="CHEBI:77893"/>
    </ligand>
</feature>
<feature type="binding site" evidence="1">
    <location>
        <position position="168"/>
    </location>
    <ligand>
        <name>N-formimidoyl-L-glutamate</name>
        <dbReference type="ChEBI" id="CHEBI:58928"/>
    </ligand>
</feature>
<feature type="binding site" evidence="1">
    <location>
        <position position="201"/>
    </location>
    <ligand>
        <name>4-imidazolone-5-propanoate</name>
        <dbReference type="ChEBI" id="CHEBI:77893"/>
    </ligand>
</feature>
<feature type="binding site" evidence="1">
    <location>
        <position position="265"/>
    </location>
    <ligand>
        <name>Fe(3+)</name>
        <dbReference type="ChEBI" id="CHEBI:29034"/>
    </ligand>
</feature>
<feature type="binding site" evidence="1">
    <location>
        <position position="265"/>
    </location>
    <ligand>
        <name>Zn(2+)</name>
        <dbReference type="ChEBI" id="CHEBI:29105"/>
    </ligand>
</feature>
<feature type="binding site" evidence="1">
    <location>
        <position position="268"/>
    </location>
    <ligand>
        <name>4-imidazolone-5-propanoate</name>
        <dbReference type="ChEBI" id="CHEBI:77893"/>
    </ligand>
</feature>
<feature type="binding site" evidence="1">
    <location>
        <position position="340"/>
    </location>
    <ligand>
        <name>Fe(3+)</name>
        <dbReference type="ChEBI" id="CHEBI:29034"/>
    </ligand>
</feature>
<feature type="binding site" evidence="1">
    <location>
        <position position="340"/>
    </location>
    <ligand>
        <name>Zn(2+)</name>
        <dbReference type="ChEBI" id="CHEBI:29105"/>
    </ligand>
</feature>
<feature type="binding site" evidence="1">
    <location>
        <position position="342"/>
    </location>
    <ligand>
        <name>N-formimidoyl-L-glutamate</name>
        <dbReference type="ChEBI" id="CHEBI:58928"/>
    </ligand>
</feature>
<feature type="binding site" evidence="1">
    <location>
        <position position="344"/>
    </location>
    <ligand>
        <name>N-formimidoyl-L-glutamate</name>
        <dbReference type="ChEBI" id="CHEBI:58928"/>
    </ligand>
</feature>
<feature type="binding site" evidence="1">
    <location>
        <position position="345"/>
    </location>
    <ligand>
        <name>4-imidazolone-5-propanoate</name>
        <dbReference type="ChEBI" id="CHEBI:77893"/>
    </ligand>
</feature>
<comment type="function">
    <text evidence="1">Catalyzes the hydrolytic cleavage of the carbon-nitrogen bond in imidazolone-5-propanoate to yield N-formimidoyl-L-glutamate. It is the third step in the universal histidine degradation pathway.</text>
</comment>
<comment type="catalytic activity">
    <reaction evidence="1">
        <text>4-imidazolone-5-propanoate + H2O = N-formimidoyl-L-glutamate</text>
        <dbReference type="Rhea" id="RHEA:23660"/>
        <dbReference type="ChEBI" id="CHEBI:15377"/>
        <dbReference type="ChEBI" id="CHEBI:58928"/>
        <dbReference type="ChEBI" id="CHEBI:77893"/>
        <dbReference type="EC" id="3.5.2.7"/>
    </reaction>
</comment>
<comment type="cofactor">
    <cofactor evidence="1">
        <name>Zn(2+)</name>
        <dbReference type="ChEBI" id="CHEBI:29105"/>
    </cofactor>
    <cofactor evidence="1">
        <name>Fe(3+)</name>
        <dbReference type="ChEBI" id="CHEBI:29034"/>
    </cofactor>
    <text evidence="1">Binds 1 zinc or iron ion per subunit.</text>
</comment>
<comment type="pathway">
    <text evidence="1">Amino-acid degradation; L-histidine degradation into L-glutamate; N-formimidoyl-L-glutamate from L-histidine: step 3/3.</text>
</comment>
<comment type="subcellular location">
    <subcellularLocation>
        <location evidence="1">Cytoplasm</location>
    </subcellularLocation>
</comment>
<comment type="similarity">
    <text evidence="1">Belongs to the metallo-dependent hydrolases superfamily. HutI family.</text>
</comment>
<comment type="sequence caution" evidence="2">
    <conflict type="erroneous initiation">
        <sequence resource="EMBL-CDS" id="ABE75711"/>
    </conflict>
</comment>
<protein>
    <recommendedName>
        <fullName evidence="1">Imidazolonepropionase</fullName>
        <ecNumber evidence="1">3.5.2.7</ecNumber>
    </recommendedName>
    <alternativeName>
        <fullName evidence="1">Imidazolone-5-propionate hydrolase</fullName>
    </alternativeName>
</protein>
<proteinExistence type="inferred from homology"/>
<accession>Q1Q9E2</accession>
<reference key="1">
    <citation type="submission" date="2006-03" db="EMBL/GenBank/DDBJ databases">
        <title>Complete sequence of chromosome of Psychrobacter cryohalolentis K5.</title>
        <authorList>
            <consortium name="US DOE Joint Genome Institute"/>
            <person name="Copeland A."/>
            <person name="Lucas S."/>
            <person name="Lapidus A."/>
            <person name="Barry K."/>
            <person name="Detter J.C."/>
            <person name="Glavina T."/>
            <person name="Hammon N."/>
            <person name="Israni S."/>
            <person name="Dalin E."/>
            <person name="Tice H."/>
            <person name="Pitluck S."/>
            <person name="Brettin T."/>
            <person name="Bruce D."/>
            <person name="Han C."/>
            <person name="Tapia R."/>
            <person name="Sims D.R."/>
            <person name="Gilna P."/>
            <person name="Schmutz J."/>
            <person name="Larimer F."/>
            <person name="Land M."/>
            <person name="Hauser L."/>
            <person name="Kyrpides N."/>
            <person name="Kim E."/>
            <person name="Richardson P."/>
        </authorList>
    </citation>
    <scope>NUCLEOTIDE SEQUENCE [LARGE SCALE GENOMIC DNA]</scope>
    <source>
        <strain>ATCC BAA-1226 / DSM 17306 / VKM B-2378 / K5</strain>
    </source>
</reference>
<sequence length="427" mass="46769">MDALTTFDHIIINANLATFSAQYGFDTYADNKDSISAAAKSTPYGQLENAAIGIKDSKIAWIGAHTQITPYLTHYQSQQITDADGHWITPGLIDCHTHIVYGGNRSNEFEARLHGANYQDIAAQGGGIVSTVRSTREANIEELFAQSEKRLLALVKEGVTSIEIKSGYGLDLKTERKMLKVARALGDKHNIHVSTTYLAAHALPPEYKDRVDDYIEQVCQWLPILHSEGLVDAVDGFCENIAFTTEQIKRVFEVARSLNLPVKLHSEQLSNIGASALVAEYQGLSSDHLEHLVEDDIKKMATSNTVAVLLPGAFYTLRDTKLPPIEELRKHQVPMAISTDCNPGTSPLTSLLLAMNMGCTLFYMTPEEVLAGATVHAAQALGLAHKGRIEVGCDADLALWDITRPADLAYQMGLNPIEGIMIKGAWR</sequence>
<gene>
    <name evidence="1" type="primary">hutI</name>
    <name type="ordered locus">Pcryo_1934</name>
</gene>
<name>HUTI_PSYCK</name>
<organism>
    <name type="scientific">Psychrobacter cryohalolentis (strain ATCC BAA-1226 / DSM 17306 / VKM B-2378 / K5)</name>
    <dbReference type="NCBI Taxonomy" id="335284"/>
    <lineage>
        <taxon>Bacteria</taxon>
        <taxon>Pseudomonadati</taxon>
        <taxon>Pseudomonadota</taxon>
        <taxon>Gammaproteobacteria</taxon>
        <taxon>Moraxellales</taxon>
        <taxon>Moraxellaceae</taxon>
        <taxon>Psychrobacter</taxon>
    </lineage>
</organism>
<dbReference type="EC" id="3.5.2.7" evidence="1"/>
<dbReference type="EMBL" id="CP000323">
    <property type="protein sequence ID" value="ABE75711.1"/>
    <property type="status" value="ALT_INIT"/>
    <property type="molecule type" value="Genomic_DNA"/>
</dbReference>
<dbReference type="RefSeq" id="WP_011514254.1">
    <property type="nucleotide sequence ID" value="NC_007969.1"/>
</dbReference>
<dbReference type="SMR" id="Q1Q9E2"/>
<dbReference type="STRING" id="335284.Pcryo_1934"/>
<dbReference type="KEGG" id="pcr:Pcryo_1934"/>
<dbReference type="eggNOG" id="COG1228">
    <property type="taxonomic scope" value="Bacteria"/>
</dbReference>
<dbReference type="HOGENOM" id="CLU_041647_0_1_6"/>
<dbReference type="UniPathway" id="UPA00379">
    <property type="reaction ID" value="UER00551"/>
</dbReference>
<dbReference type="Proteomes" id="UP000002425">
    <property type="component" value="Chromosome"/>
</dbReference>
<dbReference type="GO" id="GO:0005737">
    <property type="term" value="C:cytoplasm"/>
    <property type="evidence" value="ECO:0007669"/>
    <property type="project" value="UniProtKB-SubCell"/>
</dbReference>
<dbReference type="GO" id="GO:0050480">
    <property type="term" value="F:imidazolonepropionase activity"/>
    <property type="evidence" value="ECO:0007669"/>
    <property type="project" value="UniProtKB-UniRule"/>
</dbReference>
<dbReference type="GO" id="GO:0005506">
    <property type="term" value="F:iron ion binding"/>
    <property type="evidence" value="ECO:0007669"/>
    <property type="project" value="UniProtKB-UniRule"/>
</dbReference>
<dbReference type="GO" id="GO:0008270">
    <property type="term" value="F:zinc ion binding"/>
    <property type="evidence" value="ECO:0007669"/>
    <property type="project" value="UniProtKB-UniRule"/>
</dbReference>
<dbReference type="GO" id="GO:0019556">
    <property type="term" value="P:L-histidine catabolic process to glutamate and formamide"/>
    <property type="evidence" value="ECO:0007669"/>
    <property type="project" value="UniProtKB-UniPathway"/>
</dbReference>
<dbReference type="GO" id="GO:0019557">
    <property type="term" value="P:L-histidine catabolic process to glutamate and formate"/>
    <property type="evidence" value="ECO:0007669"/>
    <property type="project" value="UniProtKB-UniPathway"/>
</dbReference>
<dbReference type="CDD" id="cd01296">
    <property type="entry name" value="Imidazolone-5PH"/>
    <property type="match status" value="1"/>
</dbReference>
<dbReference type="FunFam" id="3.20.20.140:FF:000007">
    <property type="entry name" value="Imidazolonepropionase"/>
    <property type="match status" value="1"/>
</dbReference>
<dbReference type="Gene3D" id="3.20.20.140">
    <property type="entry name" value="Metal-dependent hydrolases"/>
    <property type="match status" value="1"/>
</dbReference>
<dbReference type="Gene3D" id="2.30.40.10">
    <property type="entry name" value="Urease, subunit C, domain 1"/>
    <property type="match status" value="1"/>
</dbReference>
<dbReference type="HAMAP" id="MF_00372">
    <property type="entry name" value="HutI"/>
    <property type="match status" value="1"/>
</dbReference>
<dbReference type="InterPro" id="IPR006680">
    <property type="entry name" value="Amidohydro-rel"/>
</dbReference>
<dbReference type="InterPro" id="IPR005920">
    <property type="entry name" value="HutI"/>
</dbReference>
<dbReference type="InterPro" id="IPR011059">
    <property type="entry name" value="Metal-dep_hydrolase_composite"/>
</dbReference>
<dbReference type="InterPro" id="IPR032466">
    <property type="entry name" value="Metal_Hydrolase"/>
</dbReference>
<dbReference type="NCBIfam" id="TIGR01224">
    <property type="entry name" value="hutI"/>
    <property type="match status" value="1"/>
</dbReference>
<dbReference type="PANTHER" id="PTHR42752">
    <property type="entry name" value="IMIDAZOLONEPROPIONASE"/>
    <property type="match status" value="1"/>
</dbReference>
<dbReference type="PANTHER" id="PTHR42752:SF1">
    <property type="entry name" value="IMIDAZOLONEPROPIONASE-RELATED"/>
    <property type="match status" value="1"/>
</dbReference>
<dbReference type="Pfam" id="PF01979">
    <property type="entry name" value="Amidohydro_1"/>
    <property type="match status" value="1"/>
</dbReference>
<dbReference type="SUPFAM" id="SSF51338">
    <property type="entry name" value="Composite domain of metallo-dependent hydrolases"/>
    <property type="match status" value="1"/>
</dbReference>
<dbReference type="SUPFAM" id="SSF51556">
    <property type="entry name" value="Metallo-dependent hydrolases"/>
    <property type="match status" value="1"/>
</dbReference>
<keyword id="KW-0963">Cytoplasm</keyword>
<keyword id="KW-0369">Histidine metabolism</keyword>
<keyword id="KW-0378">Hydrolase</keyword>
<keyword id="KW-0408">Iron</keyword>
<keyword id="KW-0479">Metal-binding</keyword>
<keyword id="KW-0862">Zinc</keyword>
<evidence type="ECO:0000255" key="1">
    <source>
        <dbReference type="HAMAP-Rule" id="MF_00372"/>
    </source>
</evidence>
<evidence type="ECO:0000305" key="2"/>